<evidence type="ECO:0000255" key="1">
    <source>
        <dbReference type="HAMAP-Rule" id="MF_00051"/>
    </source>
</evidence>
<proteinExistence type="inferred from homology"/>
<name>GLYA_METAC</name>
<feature type="chain" id="PRO_0000113712" description="Serine hydroxymethyltransferase">
    <location>
        <begin position="1"/>
        <end position="412"/>
    </location>
</feature>
<feature type="binding site" evidence="1">
    <location>
        <position position="117"/>
    </location>
    <ligand>
        <name>(6S)-5,6,7,8-tetrahydrofolate</name>
        <dbReference type="ChEBI" id="CHEBI:57453"/>
    </ligand>
</feature>
<feature type="binding site" evidence="1">
    <location>
        <begin position="121"/>
        <end position="123"/>
    </location>
    <ligand>
        <name>(6S)-5,6,7,8-tetrahydrofolate</name>
        <dbReference type="ChEBI" id="CHEBI:57453"/>
    </ligand>
</feature>
<feature type="binding site" evidence="1">
    <location>
        <position position="242"/>
    </location>
    <ligand>
        <name>(6S)-5,6,7,8-tetrahydrofolate</name>
        <dbReference type="ChEBI" id="CHEBI:57453"/>
    </ligand>
</feature>
<feature type="binding site" evidence="1">
    <location>
        <begin position="350"/>
        <end position="352"/>
    </location>
    <ligand>
        <name>(6S)-5,6,7,8-tetrahydrofolate</name>
        <dbReference type="ChEBI" id="CHEBI:57453"/>
    </ligand>
</feature>
<feature type="site" description="Plays an important role in substrate specificity" evidence="1">
    <location>
        <position position="225"/>
    </location>
</feature>
<feature type="modified residue" description="N6-(pyridoxal phosphate)lysine" evidence="1">
    <location>
        <position position="226"/>
    </location>
</feature>
<keyword id="KW-0028">Amino-acid biosynthesis</keyword>
<keyword id="KW-0963">Cytoplasm</keyword>
<keyword id="KW-0554">One-carbon metabolism</keyword>
<keyword id="KW-0663">Pyridoxal phosphate</keyword>
<keyword id="KW-1185">Reference proteome</keyword>
<keyword id="KW-0808">Transferase</keyword>
<accession>Q8TK94</accession>
<gene>
    <name evidence="1" type="primary">glyA</name>
    <name type="ordered locus">MA_3520</name>
</gene>
<reference key="1">
    <citation type="journal article" date="2002" name="Genome Res.">
        <title>The genome of Methanosarcina acetivorans reveals extensive metabolic and physiological diversity.</title>
        <authorList>
            <person name="Galagan J.E."/>
            <person name="Nusbaum C."/>
            <person name="Roy A."/>
            <person name="Endrizzi M.G."/>
            <person name="Macdonald P."/>
            <person name="FitzHugh W."/>
            <person name="Calvo S."/>
            <person name="Engels R."/>
            <person name="Smirnov S."/>
            <person name="Atnoor D."/>
            <person name="Brown A."/>
            <person name="Allen N."/>
            <person name="Naylor J."/>
            <person name="Stange-Thomann N."/>
            <person name="DeArellano K."/>
            <person name="Johnson R."/>
            <person name="Linton L."/>
            <person name="McEwan P."/>
            <person name="McKernan K."/>
            <person name="Talamas J."/>
            <person name="Tirrell A."/>
            <person name="Ye W."/>
            <person name="Zimmer A."/>
            <person name="Barber R.D."/>
            <person name="Cann I."/>
            <person name="Graham D.E."/>
            <person name="Grahame D.A."/>
            <person name="Guss A.M."/>
            <person name="Hedderich R."/>
            <person name="Ingram-Smith C."/>
            <person name="Kuettner H.C."/>
            <person name="Krzycki J.A."/>
            <person name="Leigh J.A."/>
            <person name="Li W."/>
            <person name="Liu J."/>
            <person name="Mukhopadhyay B."/>
            <person name="Reeve J.N."/>
            <person name="Smith K."/>
            <person name="Springer T.A."/>
            <person name="Umayam L.A."/>
            <person name="White O."/>
            <person name="White R.H."/>
            <person name="de Macario E.C."/>
            <person name="Ferry J.G."/>
            <person name="Jarrell K.F."/>
            <person name="Jing H."/>
            <person name="Macario A.J.L."/>
            <person name="Paulsen I.T."/>
            <person name="Pritchett M."/>
            <person name="Sowers K.R."/>
            <person name="Swanson R.V."/>
            <person name="Zinder S.H."/>
            <person name="Lander E."/>
            <person name="Metcalf W.W."/>
            <person name="Birren B."/>
        </authorList>
    </citation>
    <scope>NUCLEOTIDE SEQUENCE [LARGE SCALE GENOMIC DNA]</scope>
    <source>
        <strain>ATCC 35395 / DSM 2834 / JCM 12185 / C2A</strain>
    </source>
</reference>
<protein>
    <recommendedName>
        <fullName evidence="1">Serine hydroxymethyltransferase</fullName>
        <shortName evidence="1">SHMT</shortName>
        <shortName evidence="1">Serine methylase</shortName>
        <ecNumber evidence="1">2.1.2.1</ecNumber>
    </recommendedName>
</protein>
<dbReference type="EC" id="2.1.2.1" evidence="1"/>
<dbReference type="EMBL" id="AE010299">
    <property type="protein sequence ID" value="AAM06883.1"/>
    <property type="molecule type" value="Genomic_DNA"/>
</dbReference>
<dbReference type="RefSeq" id="WP_011023436.1">
    <property type="nucleotide sequence ID" value="NC_003552.1"/>
</dbReference>
<dbReference type="SMR" id="Q8TK94"/>
<dbReference type="FunCoup" id="Q8TK94">
    <property type="interactions" value="324"/>
</dbReference>
<dbReference type="STRING" id="188937.MA_3520"/>
<dbReference type="EnsemblBacteria" id="AAM06883">
    <property type="protein sequence ID" value="AAM06883"/>
    <property type="gene ID" value="MA_3520"/>
</dbReference>
<dbReference type="GeneID" id="1475414"/>
<dbReference type="KEGG" id="mac:MA_3520"/>
<dbReference type="HOGENOM" id="CLU_022477_2_1_2"/>
<dbReference type="InParanoid" id="Q8TK94"/>
<dbReference type="OrthoDB" id="5821at2157"/>
<dbReference type="PhylomeDB" id="Q8TK94"/>
<dbReference type="UniPathway" id="UPA00193"/>
<dbReference type="UniPathway" id="UPA00288">
    <property type="reaction ID" value="UER01023"/>
</dbReference>
<dbReference type="Proteomes" id="UP000002487">
    <property type="component" value="Chromosome"/>
</dbReference>
<dbReference type="GO" id="GO:0005737">
    <property type="term" value="C:cytoplasm"/>
    <property type="evidence" value="ECO:0000318"/>
    <property type="project" value="GO_Central"/>
</dbReference>
<dbReference type="GO" id="GO:0004372">
    <property type="term" value="F:glycine hydroxymethyltransferase activity"/>
    <property type="evidence" value="ECO:0000318"/>
    <property type="project" value="GO_Central"/>
</dbReference>
<dbReference type="GO" id="GO:0030170">
    <property type="term" value="F:pyridoxal phosphate binding"/>
    <property type="evidence" value="ECO:0000318"/>
    <property type="project" value="GO_Central"/>
</dbReference>
<dbReference type="GO" id="GO:0019264">
    <property type="term" value="P:glycine biosynthetic process from serine"/>
    <property type="evidence" value="ECO:0000318"/>
    <property type="project" value="GO_Central"/>
</dbReference>
<dbReference type="GO" id="GO:0035999">
    <property type="term" value="P:tetrahydrofolate interconversion"/>
    <property type="evidence" value="ECO:0007669"/>
    <property type="project" value="UniProtKB-UniRule"/>
</dbReference>
<dbReference type="GO" id="GO:0046653">
    <property type="term" value="P:tetrahydrofolate metabolic process"/>
    <property type="evidence" value="ECO:0000318"/>
    <property type="project" value="GO_Central"/>
</dbReference>
<dbReference type="CDD" id="cd00378">
    <property type="entry name" value="SHMT"/>
    <property type="match status" value="1"/>
</dbReference>
<dbReference type="FunFam" id="3.40.640.10:FF:000001">
    <property type="entry name" value="Serine hydroxymethyltransferase"/>
    <property type="match status" value="1"/>
</dbReference>
<dbReference type="FunFam" id="3.90.1150.10:FF:000003">
    <property type="entry name" value="Serine hydroxymethyltransferase"/>
    <property type="match status" value="1"/>
</dbReference>
<dbReference type="Gene3D" id="3.90.1150.10">
    <property type="entry name" value="Aspartate Aminotransferase, domain 1"/>
    <property type="match status" value="1"/>
</dbReference>
<dbReference type="Gene3D" id="3.40.640.10">
    <property type="entry name" value="Type I PLP-dependent aspartate aminotransferase-like (Major domain)"/>
    <property type="match status" value="1"/>
</dbReference>
<dbReference type="HAMAP" id="MF_00051">
    <property type="entry name" value="SHMT"/>
    <property type="match status" value="1"/>
</dbReference>
<dbReference type="InterPro" id="IPR015424">
    <property type="entry name" value="PyrdxlP-dep_Trfase"/>
</dbReference>
<dbReference type="InterPro" id="IPR015421">
    <property type="entry name" value="PyrdxlP-dep_Trfase_major"/>
</dbReference>
<dbReference type="InterPro" id="IPR015422">
    <property type="entry name" value="PyrdxlP-dep_Trfase_small"/>
</dbReference>
<dbReference type="InterPro" id="IPR001085">
    <property type="entry name" value="Ser_HO-MeTrfase"/>
</dbReference>
<dbReference type="InterPro" id="IPR049943">
    <property type="entry name" value="Ser_HO-MeTrfase-like"/>
</dbReference>
<dbReference type="InterPro" id="IPR019798">
    <property type="entry name" value="Ser_HO-MeTrfase_PLP_BS"/>
</dbReference>
<dbReference type="InterPro" id="IPR039429">
    <property type="entry name" value="SHMT-like_dom"/>
</dbReference>
<dbReference type="NCBIfam" id="NF000586">
    <property type="entry name" value="PRK00011.1"/>
    <property type="match status" value="1"/>
</dbReference>
<dbReference type="PANTHER" id="PTHR11680">
    <property type="entry name" value="SERINE HYDROXYMETHYLTRANSFERASE"/>
    <property type="match status" value="1"/>
</dbReference>
<dbReference type="PANTHER" id="PTHR11680:SF35">
    <property type="entry name" value="SERINE HYDROXYMETHYLTRANSFERASE 1"/>
    <property type="match status" value="1"/>
</dbReference>
<dbReference type="Pfam" id="PF00464">
    <property type="entry name" value="SHMT"/>
    <property type="match status" value="1"/>
</dbReference>
<dbReference type="PIRSF" id="PIRSF000412">
    <property type="entry name" value="SHMT"/>
    <property type="match status" value="1"/>
</dbReference>
<dbReference type="SUPFAM" id="SSF53383">
    <property type="entry name" value="PLP-dependent transferases"/>
    <property type="match status" value="1"/>
</dbReference>
<dbReference type="PROSITE" id="PS00096">
    <property type="entry name" value="SHMT"/>
    <property type="match status" value="1"/>
</dbReference>
<sequence>MSYIEKIDPDMFEAIQKEADRQEHKLNLIASENYASRAVMEAQGSIMTNKYAEGYSGKRYYGGCDFVDIAENLAIARAKEIFGAKYVNVQPHSGSGANMAVYFSVLQPGDTIMSMDLSHGGHLSHGSPVSFSGKLYNIVPYGVSKETEALDYDELMKMAKECKPKMIVCGASAYPRVIDFKKFREIADEVGAYLLADIAHIAGLVVSGVHPSPVPYADFVTTTTHKTLRGPRGGMIISKTEELAMGVNKAVFPGIQGGPLMHVIAAKAVAFKEAMDEKFRQDQAQTVKNAKVLCACLKEKGFDIVSGGTDNHLMLVNLNNMNITGKDAEAAMSKAGIIANKNTVPFETRSPFITSGVRLGTPACTTRGMKEKEMELIADYIETAIKNAGNDALLSEVSAKVRDLCSRFPVYS</sequence>
<organism>
    <name type="scientific">Methanosarcina acetivorans (strain ATCC 35395 / DSM 2834 / JCM 12185 / C2A)</name>
    <dbReference type="NCBI Taxonomy" id="188937"/>
    <lineage>
        <taxon>Archaea</taxon>
        <taxon>Methanobacteriati</taxon>
        <taxon>Methanobacteriota</taxon>
        <taxon>Stenosarchaea group</taxon>
        <taxon>Methanomicrobia</taxon>
        <taxon>Methanosarcinales</taxon>
        <taxon>Methanosarcinaceae</taxon>
        <taxon>Methanosarcina</taxon>
    </lineage>
</organism>
<comment type="function">
    <text evidence="1">Catalyzes the reversible interconversion of serine and glycine with tetrahydrofolate (THF) serving as the one-carbon carrier. Also exhibits THF-independent aldolase activity toward beta-hydroxyamino acids, producing glycine and aldehydes, via a retro-aldol mechanism.</text>
</comment>
<comment type="catalytic activity">
    <reaction evidence="1">
        <text>(6R)-5,10-methylene-5,6,7,8-tetrahydrofolate + glycine + H2O = (6S)-5,6,7,8-tetrahydrofolate + L-serine</text>
        <dbReference type="Rhea" id="RHEA:15481"/>
        <dbReference type="ChEBI" id="CHEBI:15377"/>
        <dbReference type="ChEBI" id="CHEBI:15636"/>
        <dbReference type="ChEBI" id="CHEBI:33384"/>
        <dbReference type="ChEBI" id="CHEBI:57305"/>
        <dbReference type="ChEBI" id="CHEBI:57453"/>
        <dbReference type="EC" id="2.1.2.1"/>
    </reaction>
</comment>
<comment type="cofactor">
    <cofactor evidence="1">
        <name>pyridoxal 5'-phosphate</name>
        <dbReference type="ChEBI" id="CHEBI:597326"/>
    </cofactor>
</comment>
<comment type="pathway">
    <text evidence="1">One-carbon metabolism; tetrahydrofolate interconversion.</text>
</comment>
<comment type="pathway">
    <text evidence="1">Amino-acid biosynthesis; glycine biosynthesis; glycine from L-serine: step 1/1.</text>
</comment>
<comment type="subunit">
    <text evidence="1">Homodimer.</text>
</comment>
<comment type="subcellular location">
    <subcellularLocation>
        <location evidence="1">Cytoplasm</location>
    </subcellularLocation>
</comment>
<comment type="similarity">
    <text evidence="1">Belongs to the SHMT family.</text>
</comment>